<comment type="function">
    <text evidence="1">Key enzyme in folate metabolism. Catalyzes an essential reaction for de novo glycine and purine synthesis, and for DNA precursor synthesis (By similarity).</text>
</comment>
<comment type="catalytic activity">
    <reaction evidence="2">
        <text>(6S)-5,6,7,8-tetrahydrofolate + NADP(+) = 7,8-dihydrofolate + NADPH + H(+)</text>
        <dbReference type="Rhea" id="RHEA:15009"/>
        <dbReference type="ChEBI" id="CHEBI:15378"/>
        <dbReference type="ChEBI" id="CHEBI:57451"/>
        <dbReference type="ChEBI" id="CHEBI:57453"/>
        <dbReference type="ChEBI" id="CHEBI:57783"/>
        <dbReference type="ChEBI" id="CHEBI:58349"/>
        <dbReference type="EC" id="1.5.1.3"/>
    </reaction>
</comment>
<comment type="pathway">
    <text>Cofactor biosynthesis; tetrahydrofolate biosynthesis; 5,6,7,8-tetrahydrofolate from 7,8-dihydrofolate: step 1/1.</text>
</comment>
<comment type="similarity">
    <text evidence="3">Belongs to the dihydrofolate reductase family.</text>
</comment>
<evidence type="ECO:0000250" key="1"/>
<evidence type="ECO:0000255" key="2">
    <source>
        <dbReference type="PROSITE-ProRule" id="PRU00660"/>
    </source>
</evidence>
<evidence type="ECO:0000305" key="3"/>
<protein>
    <recommendedName>
        <fullName>Dihydrofolate reductase</fullName>
        <ecNumber>1.5.1.3</ecNumber>
    </recommendedName>
</protein>
<proteinExistence type="evidence at protein level"/>
<keyword id="KW-0903">Direct protein sequencing</keyword>
<keyword id="KW-0521">NADP</keyword>
<keyword id="KW-0554">One-carbon metabolism</keyword>
<keyword id="KW-0560">Oxidoreductase</keyword>
<gene>
    <name type="primary">folA</name>
</gene>
<organism>
    <name type="scientific">Enterococcus faecium</name>
    <name type="common">Streptococcus faecium</name>
    <dbReference type="NCBI Taxonomy" id="1352"/>
    <lineage>
        <taxon>Bacteria</taxon>
        <taxon>Bacillati</taxon>
        <taxon>Bacillota</taxon>
        <taxon>Bacilli</taxon>
        <taxon>Lactobacillales</taxon>
        <taxon>Enterococcaceae</taxon>
        <taxon>Enterococcus</taxon>
    </lineage>
</organism>
<reference key="1">
    <citation type="journal article" date="1975" name="J. Biol. Chem.">
        <title>The structure of the mutant dihydrofolate reductase from Streptococcus faecium. Amino acid sequence of peptide CNBr 7 and complete sequence of the protein.</title>
        <authorList>
            <person name="Peterson D.L."/>
            <person name="Gleisner J.M."/>
            <person name="Blakley R.L."/>
        </authorList>
    </citation>
    <scope>PROTEIN SEQUENCE</scope>
    <source>
        <strain>A / var. Durans</strain>
    </source>
</reference>
<sequence>MFISMWAQDKNGLIGKDGLLPWRLPNDMRFFREHTMDKILVMGRKTYEGMGKLSLPYRHIIVLTTQKDFKVEKNAEVLHSIDELLAYAKDIPEDIYVSGGSRIFQALLPETKIIWRTLIDAEFEGDTFIGEIDFTSFELVEEHEGIVNQENQYPHRFQKWQKMSKVV</sequence>
<dbReference type="EC" id="1.5.1.3"/>
<dbReference type="PIR" id="A00392">
    <property type="entry name" value="RDSODF"/>
</dbReference>
<dbReference type="SMR" id="P00380"/>
<dbReference type="STRING" id="1352.AL014_07685"/>
<dbReference type="ChEMBL" id="CHEMBL3243913"/>
<dbReference type="DrugCentral" id="P00380"/>
<dbReference type="SABIO-RK" id="P00380"/>
<dbReference type="UniPathway" id="UPA00077">
    <property type="reaction ID" value="UER00158"/>
</dbReference>
<dbReference type="GO" id="GO:0005829">
    <property type="term" value="C:cytosol"/>
    <property type="evidence" value="ECO:0007669"/>
    <property type="project" value="TreeGrafter"/>
</dbReference>
<dbReference type="GO" id="GO:0004146">
    <property type="term" value="F:dihydrofolate reductase activity"/>
    <property type="evidence" value="ECO:0007669"/>
    <property type="project" value="UniProtKB-EC"/>
</dbReference>
<dbReference type="GO" id="GO:0050661">
    <property type="term" value="F:NADP binding"/>
    <property type="evidence" value="ECO:0007669"/>
    <property type="project" value="InterPro"/>
</dbReference>
<dbReference type="GO" id="GO:0046452">
    <property type="term" value="P:dihydrofolate metabolic process"/>
    <property type="evidence" value="ECO:0007669"/>
    <property type="project" value="TreeGrafter"/>
</dbReference>
<dbReference type="GO" id="GO:0046655">
    <property type="term" value="P:folic acid metabolic process"/>
    <property type="evidence" value="ECO:0007669"/>
    <property type="project" value="TreeGrafter"/>
</dbReference>
<dbReference type="GO" id="GO:0006730">
    <property type="term" value="P:one-carbon metabolic process"/>
    <property type="evidence" value="ECO:0007669"/>
    <property type="project" value="UniProtKB-KW"/>
</dbReference>
<dbReference type="GO" id="GO:0046654">
    <property type="term" value="P:tetrahydrofolate biosynthetic process"/>
    <property type="evidence" value="ECO:0007669"/>
    <property type="project" value="UniProtKB-UniPathway"/>
</dbReference>
<dbReference type="CDD" id="cd00209">
    <property type="entry name" value="DHFR"/>
    <property type="match status" value="1"/>
</dbReference>
<dbReference type="Gene3D" id="3.40.430.10">
    <property type="entry name" value="Dihydrofolate Reductase, subunit A"/>
    <property type="match status" value="1"/>
</dbReference>
<dbReference type="InterPro" id="IPR012259">
    <property type="entry name" value="DHFR"/>
</dbReference>
<dbReference type="InterPro" id="IPR024072">
    <property type="entry name" value="DHFR-like_dom_sf"/>
</dbReference>
<dbReference type="InterPro" id="IPR017925">
    <property type="entry name" value="DHFR_CS"/>
</dbReference>
<dbReference type="InterPro" id="IPR001796">
    <property type="entry name" value="DHFR_dom"/>
</dbReference>
<dbReference type="PANTHER" id="PTHR48069">
    <property type="entry name" value="DIHYDROFOLATE REDUCTASE"/>
    <property type="match status" value="1"/>
</dbReference>
<dbReference type="PANTHER" id="PTHR48069:SF3">
    <property type="entry name" value="DIHYDROFOLATE REDUCTASE"/>
    <property type="match status" value="1"/>
</dbReference>
<dbReference type="Pfam" id="PF00186">
    <property type="entry name" value="DHFR_1"/>
    <property type="match status" value="1"/>
</dbReference>
<dbReference type="PIRSF" id="PIRSF000194">
    <property type="entry name" value="DHFR"/>
    <property type="match status" value="1"/>
</dbReference>
<dbReference type="PRINTS" id="PR00070">
    <property type="entry name" value="DHFR"/>
</dbReference>
<dbReference type="SUPFAM" id="SSF53597">
    <property type="entry name" value="Dihydrofolate reductase-like"/>
    <property type="match status" value="1"/>
</dbReference>
<dbReference type="PROSITE" id="PS00075">
    <property type="entry name" value="DHFR_1"/>
    <property type="match status" value="1"/>
</dbReference>
<dbReference type="PROSITE" id="PS51330">
    <property type="entry name" value="DHFR_2"/>
    <property type="match status" value="1"/>
</dbReference>
<name>DYR_ENTFC</name>
<feature type="chain" id="PRO_0000186390" description="Dihydrofolate reductase">
    <location>
        <begin position="1"/>
        <end position="167"/>
    </location>
</feature>
<feature type="domain" description="DHFR" evidence="2">
    <location>
        <begin position="1"/>
        <end position="162"/>
    </location>
</feature>
<feature type="binding site" evidence="1">
    <location>
        <position position="7"/>
    </location>
    <ligand>
        <name>NADP(+)</name>
        <dbReference type="ChEBI" id="CHEBI:58349"/>
    </ligand>
</feature>
<feature type="binding site" evidence="1">
    <location>
        <begin position="13"/>
        <end position="19"/>
    </location>
    <ligand>
        <name>NADP(+)</name>
        <dbReference type="ChEBI" id="CHEBI:58349"/>
    </ligand>
</feature>
<feature type="binding site" evidence="1">
    <location>
        <position position="27"/>
    </location>
    <ligand>
        <name>substrate</name>
    </ligand>
</feature>
<feature type="binding site" evidence="1">
    <location>
        <begin position="45"/>
        <end position="46"/>
    </location>
    <ligand>
        <name>NADP(+)</name>
        <dbReference type="ChEBI" id="CHEBI:58349"/>
    </ligand>
</feature>
<feature type="binding site" evidence="1">
    <location>
        <position position="58"/>
    </location>
    <ligand>
        <name>substrate</name>
    </ligand>
</feature>
<feature type="binding site" evidence="1">
    <location>
        <begin position="64"/>
        <end position="65"/>
    </location>
    <ligand>
        <name>NADP(+)</name>
        <dbReference type="ChEBI" id="CHEBI:58349"/>
    </ligand>
</feature>
<feature type="binding site" evidence="1">
    <location>
        <begin position="99"/>
        <end position="106"/>
    </location>
    <ligand>
        <name>NADP(+)</name>
        <dbReference type="ChEBI" id="CHEBI:58349"/>
    </ligand>
</feature>
<feature type="binding site" evidence="1">
    <location>
        <position position="117"/>
    </location>
    <ligand>
        <name>substrate</name>
    </ligand>
</feature>
<accession>P00380</accession>